<gene>
    <name evidence="1" type="primary">proS</name>
    <name type="ordered locus">DP1164</name>
</gene>
<comment type="function">
    <text evidence="1">Catalyzes the attachment of proline to tRNA(Pro) in a two-step reaction: proline is first activated by ATP to form Pro-AMP and then transferred to the acceptor end of tRNA(Pro). As ProRS can inadvertently accommodate and process non-cognate amino acids such as alanine and cysteine, to avoid such errors it has two additional distinct editing activities against alanine. One activity is designated as 'pretransfer' editing and involves the tRNA(Pro)-independent hydrolysis of activated Ala-AMP. The other activity is designated 'posttransfer' editing and involves deacylation of mischarged Ala-tRNA(Pro). The misacylated Cys-tRNA(Pro) is not edited by ProRS.</text>
</comment>
<comment type="catalytic activity">
    <reaction evidence="1">
        <text>tRNA(Pro) + L-proline + ATP = L-prolyl-tRNA(Pro) + AMP + diphosphate</text>
        <dbReference type="Rhea" id="RHEA:14305"/>
        <dbReference type="Rhea" id="RHEA-COMP:9700"/>
        <dbReference type="Rhea" id="RHEA-COMP:9702"/>
        <dbReference type="ChEBI" id="CHEBI:30616"/>
        <dbReference type="ChEBI" id="CHEBI:33019"/>
        <dbReference type="ChEBI" id="CHEBI:60039"/>
        <dbReference type="ChEBI" id="CHEBI:78442"/>
        <dbReference type="ChEBI" id="CHEBI:78532"/>
        <dbReference type="ChEBI" id="CHEBI:456215"/>
        <dbReference type="EC" id="6.1.1.15"/>
    </reaction>
</comment>
<comment type="subunit">
    <text evidence="1">Homodimer.</text>
</comment>
<comment type="subcellular location">
    <subcellularLocation>
        <location evidence="1">Cytoplasm</location>
    </subcellularLocation>
</comment>
<comment type="domain">
    <text evidence="1">Consists of three domains: the N-terminal catalytic domain, the editing domain and the C-terminal anticodon-binding domain.</text>
</comment>
<comment type="similarity">
    <text evidence="1">Belongs to the class-II aminoacyl-tRNA synthetase family. ProS type 1 subfamily.</text>
</comment>
<keyword id="KW-0030">Aminoacyl-tRNA synthetase</keyword>
<keyword id="KW-0067">ATP-binding</keyword>
<keyword id="KW-0963">Cytoplasm</keyword>
<keyword id="KW-0436">Ligase</keyword>
<keyword id="KW-0547">Nucleotide-binding</keyword>
<keyword id="KW-0648">Protein biosynthesis</keyword>
<keyword id="KW-1185">Reference proteome</keyword>
<accession>Q6AP31</accession>
<reference key="1">
    <citation type="journal article" date="2004" name="Environ. Microbiol.">
        <title>The genome of Desulfotalea psychrophila, a sulfate-reducing bacterium from permanently cold Arctic sediments.</title>
        <authorList>
            <person name="Rabus R."/>
            <person name="Ruepp A."/>
            <person name="Frickey T."/>
            <person name="Rattei T."/>
            <person name="Fartmann B."/>
            <person name="Stark M."/>
            <person name="Bauer M."/>
            <person name="Zibat A."/>
            <person name="Lombardot T."/>
            <person name="Becker I."/>
            <person name="Amann J."/>
            <person name="Gellner K."/>
            <person name="Teeling H."/>
            <person name="Leuschner W.D."/>
            <person name="Gloeckner F.-O."/>
            <person name="Lupas A.N."/>
            <person name="Amann R."/>
            <person name="Klenk H.-P."/>
        </authorList>
    </citation>
    <scope>NUCLEOTIDE SEQUENCE [LARGE SCALE GENOMIC DNA]</scope>
    <source>
        <strain>DSM 12343 / LSv54</strain>
    </source>
</reference>
<proteinExistence type="inferred from homology"/>
<evidence type="ECO:0000255" key="1">
    <source>
        <dbReference type="HAMAP-Rule" id="MF_01569"/>
    </source>
</evidence>
<name>SYP_DESPS</name>
<dbReference type="EC" id="6.1.1.15" evidence="1"/>
<dbReference type="EMBL" id="CR522870">
    <property type="protein sequence ID" value="CAG35893.1"/>
    <property type="molecule type" value="Genomic_DNA"/>
</dbReference>
<dbReference type="RefSeq" id="WP_011188405.1">
    <property type="nucleotide sequence ID" value="NC_006138.1"/>
</dbReference>
<dbReference type="SMR" id="Q6AP31"/>
<dbReference type="STRING" id="177439.DP1164"/>
<dbReference type="KEGG" id="dps:DP1164"/>
<dbReference type="eggNOG" id="COG0442">
    <property type="taxonomic scope" value="Bacteria"/>
</dbReference>
<dbReference type="HOGENOM" id="CLU_016739_0_0_7"/>
<dbReference type="OrthoDB" id="9809052at2"/>
<dbReference type="Proteomes" id="UP000000602">
    <property type="component" value="Chromosome"/>
</dbReference>
<dbReference type="GO" id="GO:0005829">
    <property type="term" value="C:cytosol"/>
    <property type="evidence" value="ECO:0007669"/>
    <property type="project" value="TreeGrafter"/>
</dbReference>
<dbReference type="GO" id="GO:0002161">
    <property type="term" value="F:aminoacyl-tRNA deacylase activity"/>
    <property type="evidence" value="ECO:0007669"/>
    <property type="project" value="InterPro"/>
</dbReference>
<dbReference type="GO" id="GO:0005524">
    <property type="term" value="F:ATP binding"/>
    <property type="evidence" value="ECO:0007669"/>
    <property type="project" value="UniProtKB-UniRule"/>
</dbReference>
<dbReference type="GO" id="GO:0004827">
    <property type="term" value="F:proline-tRNA ligase activity"/>
    <property type="evidence" value="ECO:0007669"/>
    <property type="project" value="UniProtKB-UniRule"/>
</dbReference>
<dbReference type="GO" id="GO:0006433">
    <property type="term" value="P:prolyl-tRNA aminoacylation"/>
    <property type="evidence" value="ECO:0007669"/>
    <property type="project" value="UniProtKB-UniRule"/>
</dbReference>
<dbReference type="CDD" id="cd04334">
    <property type="entry name" value="ProRS-INS"/>
    <property type="match status" value="1"/>
</dbReference>
<dbReference type="CDD" id="cd00861">
    <property type="entry name" value="ProRS_anticodon_short"/>
    <property type="match status" value="1"/>
</dbReference>
<dbReference type="CDD" id="cd00779">
    <property type="entry name" value="ProRS_core_prok"/>
    <property type="match status" value="1"/>
</dbReference>
<dbReference type="FunFam" id="3.30.930.10:FF:000012">
    <property type="entry name" value="Proline--tRNA ligase"/>
    <property type="match status" value="1"/>
</dbReference>
<dbReference type="FunFam" id="3.30.930.10:FF:000065">
    <property type="entry name" value="Proline--tRNA ligase"/>
    <property type="match status" value="1"/>
</dbReference>
<dbReference type="Gene3D" id="3.40.50.800">
    <property type="entry name" value="Anticodon-binding domain"/>
    <property type="match status" value="1"/>
</dbReference>
<dbReference type="Gene3D" id="3.30.930.10">
    <property type="entry name" value="Bira Bifunctional Protein, Domain 2"/>
    <property type="match status" value="2"/>
</dbReference>
<dbReference type="HAMAP" id="MF_01569">
    <property type="entry name" value="Pro_tRNA_synth_type1"/>
    <property type="match status" value="1"/>
</dbReference>
<dbReference type="InterPro" id="IPR002314">
    <property type="entry name" value="aa-tRNA-synt_IIb"/>
</dbReference>
<dbReference type="InterPro" id="IPR006195">
    <property type="entry name" value="aa-tRNA-synth_II"/>
</dbReference>
<dbReference type="InterPro" id="IPR045864">
    <property type="entry name" value="aa-tRNA-synth_II/BPL/LPL"/>
</dbReference>
<dbReference type="InterPro" id="IPR004154">
    <property type="entry name" value="Anticodon-bd"/>
</dbReference>
<dbReference type="InterPro" id="IPR036621">
    <property type="entry name" value="Anticodon-bd_dom_sf"/>
</dbReference>
<dbReference type="InterPro" id="IPR002316">
    <property type="entry name" value="Pro-tRNA-ligase_IIa"/>
</dbReference>
<dbReference type="InterPro" id="IPR004500">
    <property type="entry name" value="Pro-tRNA-synth_IIa_bac-type"/>
</dbReference>
<dbReference type="InterPro" id="IPR023717">
    <property type="entry name" value="Pro-tRNA-Synthase_IIa_type1"/>
</dbReference>
<dbReference type="InterPro" id="IPR050062">
    <property type="entry name" value="Pro-tRNA_synthetase"/>
</dbReference>
<dbReference type="InterPro" id="IPR044140">
    <property type="entry name" value="ProRS_anticodon_short"/>
</dbReference>
<dbReference type="InterPro" id="IPR033730">
    <property type="entry name" value="ProRS_core_prok"/>
</dbReference>
<dbReference type="InterPro" id="IPR036754">
    <property type="entry name" value="YbaK/aa-tRNA-synt-asso_dom_sf"/>
</dbReference>
<dbReference type="InterPro" id="IPR007214">
    <property type="entry name" value="YbaK/aa-tRNA-synth-assoc-dom"/>
</dbReference>
<dbReference type="NCBIfam" id="NF006625">
    <property type="entry name" value="PRK09194.1"/>
    <property type="match status" value="1"/>
</dbReference>
<dbReference type="NCBIfam" id="TIGR00409">
    <property type="entry name" value="proS_fam_II"/>
    <property type="match status" value="1"/>
</dbReference>
<dbReference type="PANTHER" id="PTHR42753">
    <property type="entry name" value="MITOCHONDRIAL RIBOSOME PROTEIN L39/PROLYL-TRNA LIGASE FAMILY MEMBER"/>
    <property type="match status" value="1"/>
</dbReference>
<dbReference type="PANTHER" id="PTHR42753:SF2">
    <property type="entry name" value="PROLINE--TRNA LIGASE"/>
    <property type="match status" value="1"/>
</dbReference>
<dbReference type="Pfam" id="PF03129">
    <property type="entry name" value="HGTP_anticodon"/>
    <property type="match status" value="1"/>
</dbReference>
<dbReference type="Pfam" id="PF00587">
    <property type="entry name" value="tRNA-synt_2b"/>
    <property type="match status" value="1"/>
</dbReference>
<dbReference type="Pfam" id="PF04073">
    <property type="entry name" value="tRNA_edit"/>
    <property type="match status" value="1"/>
</dbReference>
<dbReference type="PIRSF" id="PIRSF001535">
    <property type="entry name" value="ProRS_1"/>
    <property type="match status" value="1"/>
</dbReference>
<dbReference type="PRINTS" id="PR01046">
    <property type="entry name" value="TRNASYNTHPRO"/>
</dbReference>
<dbReference type="SUPFAM" id="SSF52954">
    <property type="entry name" value="Class II aaRS ABD-related"/>
    <property type="match status" value="1"/>
</dbReference>
<dbReference type="SUPFAM" id="SSF55681">
    <property type="entry name" value="Class II aaRS and biotin synthetases"/>
    <property type="match status" value="1"/>
</dbReference>
<dbReference type="SUPFAM" id="SSF55826">
    <property type="entry name" value="YbaK/ProRS associated domain"/>
    <property type="match status" value="1"/>
</dbReference>
<dbReference type="PROSITE" id="PS50862">
    <property type="entry name" value="AA_TRNA_LIGASE_II"/>
    <property type="match status" value="1"/>
</dbReference>
<protein>
    <recommendedName>
        <fullName evidence="1">Proline--tRNA ligase</fullName>
        <ecNumber evidence="1">6.1.1.15</ecNumber>
    </recommendedName>
    <alternativeName>
        <fullName evidence="1">Prolyl-tRNA synthetase</fullName>
        <shortName evidence="1">ProRS</shortName>
    </alternativeName>
</protein>
<organism>
    <name type="scientific">Desulfotalea psychrophila (strain LSv54 / DSM 12343)</name>
    <dbReference type="NCBI Taxonomy" id="177439"/>
    <lineage>
        <taxon>Bacteria</taxon>
        <taxon>Pseudomonadati</taxon>
        <taxon>Thermodesulfobacteriota</taxon>
        <taxon>Desulfobulbia</taxon>
        <taxon>Desulfobulbales</taxon>
        <taxon>Desulfocapsaceae</taxon>
        <taxon>Desulfotalea</taxon>
    </lineage>
</organism>
<sequence>MRYSQSFIPTKKETPAEAEVASHQLMLRAGFMRKLSSGVYSYLPYGLAAIRKVENIVREEMNRAGAQEMLMPMVQPADLWKETGRYEKYGPELLRFFDRNNRESCLGPTHEEVITDIVRNELSSYRDLPINLYQIQTKFRDEIRPRFGLMRGREFVMKDAYSFDVDDEQANLSYDKMFEAYKRIFTRCGLQFRPVQADSGAIGGSHSHEFMVLAKTGEDTIVVCKDCEYAANMEKAEVKLVATENDEALAELEKIETPGKRKVNAVCDFLQITPQQLVKTMVFEADGEAVAVLVRGDREVEEVKLKNLLGVADVELMDDKAVFDATGVPTGYLGPVAIPIRVVADQEVMVMKNFYVGGNEKNFHLKNVNIERDCTVSAVADLRQISTDDPCPRCGGRLELTEGIEVGHVFKLGTGYSESMNARFQDGTGDEKPFVMGCYGIGVSRVVAAAIEQNHDKDGIIFPVPLAPYTVTVLNLGLKDPEITAAAEKLYAELQAAGLSVLLDDRDERPGAKFKDADLLGIPYRLTVGKGLAKNGMVEVRRRRDGHTEEMTPEVAADFLARCIQAELTD</sequence>
<feature type="chain" id="PRO_0000248685" description="Proline--tRNA ligase">
    <location>
        <begin position="1"/>
        <end position="570"/>
    </location>
</feature>